<organism evidence="19">
    <name type="scientific">Cryptococcus neoformans var. grubii serotype A (strain H99 / ATCC 208821 / CBS 10515 / FGSC 9487)</name>
    <name type="common">Filobasidiella neoformans var. grubii</name>
    <dbReference type="NCBI Taxonomy" id="235443"/>
    <lineage>
        <taxon>Eukaryota</taxon>
        <taxon>Fungi</taxon>
        <taxon>Dikarya</taxon>
        <taxon>Basidiomycota</taxon>
        <taxon>Agaricomycotina</taxon>
        <taxon>Tremellomycetes</taxon>
        <taxon>Tremellales</taxon>
        <taxon>Cryptococcaceae</taxon>
        <taxon>Cryptococcus</taxon>
        <taxon>Cryptococcus neoformans species complex</taxon>
    </lineage>
</organism>
<accession>J9VPD7</accession>
<protein>
    <recommendedName>
        <fullName evidence="14">Chitin deacetylase 1</fullName>
        <ecNumber evidence="16 17">3.5.1.41</ecNumber>
    </recommendedName>
</protein>
<gene>
    <name evidence="14" type="primary">CDA1</name>
    <name evidence="18" type="ORF">CNAG_05799</name>
</gene>
<comment type="function">
    <text evidence="6 7 9 11 13">Hydrolyzes the N-acetamido groups of N-acetyl-D-glucosamine residues in chitin to form chitosan and acetate (PubMed:17400891, PubMed:30459196). Chitosan is required to anchor melanin to the cell wall, for maintenance of cell wall integrity, and for proper cytokinesis (PubMed:17400891). Plays a major role in synthesizing cell wall chitosan during host infection; chitosan offers an advantage during infection as it is less readily detected than chitin by host immunosurveillance mechanisms (PubMed:21784998, PubMed:27165801, PubMed:30459196, PubMed:32071275).</text>
</comment>
<comment type="catalytic activity">
    <reaction evidence="16 17">
        <text>[(1-&gt;4)-N-acetyl-beta-D-glucosaminyl](n) + n H2O = chitosan + n acetate</text>
        <dbReference type="Rhea" id="RHEA:10464"/>
        <dbReference type="Rhea" id="RHEA-COMP:9593"/>
        <dbReference type="Rhea" id="RHEA-COMP:9597"/>
        <dbReference type="ChEBI" id="CHEBI:15377"/>
        <dbReference type="ChEBI" id="CHEBI:17029"/>
        <dbReference type="ChEBI" id="CHEBI:30089"/>
        <dbReference type="ChEBI" id="CHEBI:57704"/>
        <dbReference type="EC" id="3.5.1.41"/>
    </reaction>
    <physiologicalReaction direction="left-to-right" evidence="16 17">
        <dbReference type="Rhea" id="RHEA:10465"/>
    </physiologicalReaction>
</comment>
<comment type="cofactor">
    <cofactor evidence="1">
        <name>Co(2+)</name>
        <dbReference type="ChEBI" id="CHEBI:48828"/>
    </cofactor>
</comment>
<comment type="subcellular location">
    <subcellularLocation>
        <location evidence="11">Secreted</location>
        <location evidence="11">Cell wall</location>
    </subcellularLocation>
    <subcellularLocation>
        <location evidence="11">Cell membrane</location>
        <topology evidence="2">Lipid-anchor</topology>
        <topology evidence="2">GPI-anchor</topology>
    </subcellularLocation>
</comment>
<comment type="developmental stage">
    <text evidence="6">Expressed during vegetative unicellular growth.</text>
</comment>
<comment type="induction">
    <text evidence="11 12">Induced during host infection (PubMed:30459196). Induced by the antifungal agent caspofungin (PubMed:31266771).</text>
</comment>
<comment type="disruption phenotype">
    <text evidence="6 7 8 9 11 13">Decreases chitosan levels during growth in host tissue (PubMed:30459196). Attenuates virulence in a mouse intranasal infection model; decreases fungal burden in mouse lung (PubMed:30459196). Triple knockout of CDA1, CDA2 and CDA3 results in an absence of cell wall chitosan, melanization of surrounding media, an increase in capsule size, sensitivity to cell wall (sodium dodecyl sulfate), osmotic (NaCl) and heat stress, and avirulence in a mouse intranasal infection model (PubMed:17400891, PubMed:21784998, PubMed:22354955, PubMed:27165801, PubMed:32071275).</text>
</comment>
<comment type="biotechnology">
    <text evidence="9 10">Recombinant CDA1 is a potential vaccine candidiate; induces protective immunity in mice against infection (PubMed:29184017). A strain lacking CDA1, CDA2, and CDA3 is a potential vaccine candidate; inoculation with heat-killed CDA1-CDA2-CDA3 knockout cells in mouse induces protective immunity to subsequent virulent fungal infection (PubMed:27165801).</text>
</comment>
<comment type="similarity">
    <text evidence="15">Belongs to the polysaccharide deacetylase family.</text>
</comment>
<name>CDA1_CRYNH</name>
<reference evidence="19" key="1">
    <citation type="journal article" date="2014" name="PLoS Genet.">
        <title>Analysis of the genome and transcriptome of Cryptococcus neoformans var. grubii reveals complex RNA expression and microevolution leading to virulence attenuation.</title>
        <authorList>
            <person name="Janbon G."/>
            <person name="Ormerod K.L."/>
            <person name="Paulet D."/>
            <person name="Byrnes E.J. III"/>
            <person name="Yadav V."/>
            <person name="Chatterjee G."/>
            <person name="Mullapudi N."/>
            <person name="Hon C.-C."/>
            <person name="Billmyre R.B."/>
            <person name="Brunel F."/>
            <person name="Bahn Y.-S."/>
            <person name="Chen W."/>
            <person name="Chen Y."/>
            <person name="Chow E.W.L."/>
            <person name="Coppee J.-Y."/>
            <person name="Floyd-Averette A."/>
            <person name="Gaillardin C."/>
            <person name="Gerik K.J."/>
            <person name="Goldberg J."/>
            <person name="Gonzalez-Hilarion S."/>
            <person name="Gujja S."/>
            <person name="Hamlin J.L."/>
            <person name="Hsueh Y.-P."/>
            <person name="Ianiri G."/>
            <person name="Jones S."/>
            <person name="Kodira C.D."/>
            <person name="Kozubowski L."/>
            <person name="Lam W."/>
            <person name="Marra M."/>
            <person name="Mesner L.D."/>
            <person name="Mieczkowski P.A."/>
            <person name="Moyrand F."/>
            <person name="Nielsen K."/>
            <person name="Proux C."/>
            <person name="Rossignol T."/>
            <person name="Schein J.E."/>
            <person name="Sun S."/>
            <person name="Wollschlaeger C."/>
            <person name="Wood I.A."/>
            <person name="Zeng Q."/>
            <person name="Neuveglise C."/>
            <person name="Newlon C.S."/>
            <person name="Perfect J.R."/>
            <person name="Lodge J.K."/>
            <person name="Idnurm A."/>
            <person name="Stajich J.E."/>
            <person name="Kronstad J.W."/>
            <person name="Sanyal K."/>
            <person name="Heitman J."/>
            <person name="Fraser J.A."/>
            <person name="Cuomo C.A."/>
            <person name="Dietrich F.S."/>
        </authorList>
    </citation>
    <scope>NUCLEOTIDE SEQUENCE [LARGE SCALE GENOMIC DNA]</scope>
    <source>
        <strain>H99 / ATCC 208821 / CBS 10515 / FGSC 9487</strain>
    </source>
</reference>
<reference evidence="15" key="2">
    <citation type="journal article" date="2007" name="Eukaryot. Cell">
        <title>Chitosan, the deacetylated form of chitin, is necessary for cell wall integrity in Cryptococcus neoformans.</title>
        <authorList>
            <person name="Baker L.G."/>
            <person name="Specht C.A."/>
            <person name="Donlin M.J."/>
            <person name="Lodge J.K."/>
        </authorList>
    </citation>
    <scope>FUNCTION</scope>
    <scope>CATALYTIC ACTIVITY</scope>
    <scope>DEVELOPMENTAL STAGE</scope>
    <scope>DISRUPTION PHENOTYPE</scope>
    <source>
        <strain>KN99</strain>
    </source>
</reference>
<reference evidence="15" key="3">
    <citation type="journal article" date="2011" name="Eukaryot. Cell">
        <title>Cell wall chitosan is necessary for virulence in the opportunistic pathogen Cryptococcus neoformans.</title>
        <authorList>
            <person name="Baker L.G."/>
            <person name="Specht C.A."/>
            <person name="Lodge J.K."/>
        </authorList>
    </citation>
    <scope>FUNCTION</scope>
    <scope>DISRUPTION PHENOTYPE</scope>
    <source>
        <strain>KN99</strain>
    </source>
</reference>
<reference evidence="15" key="4">
    <citation type="journal article" date="2012" name="MBio">
        <title>A glycosylphosphatidylinositol anchor is required for membrane localization but dispensable for cell wall association of chitin deacetylase 2 in Cryptococcus neoformans.</title>
        <authorList>
            <person name="Gilbert N.M."/>
            <person name="Baker L.G."/>
            <person name="Specht C.A."/>
            <person name="Lodge J.K."/>
        </authorList>
    </citation>
    <scope>DISRUPTION PHENOTYPE</scope>
    <source>
        <strain>H99 / ATCC 208821 / CBS 10515 / FGSC 9487</strain>
        <strain>KN99</strain>
    </source>
</reference>
<reference evidence="15" key="5">
    <citation type="journal article" date="2016" name="MBio">
        <title>Induction of Protective Immunity to Cryptococcal Infection in Mice by a Heat-Killed, Chitosan-Deficient Strain of Cryptococcus neoformans.</title>
        <authorList>
            <person name="Upadhya R."/>
            <person name="Lam W.C."/>
            <person name="Maybruck B."/>
            <person name="Specht C.A."/>
            <person name="Levitz S.M."/>
            <person name="Lodge J.K."/>
        </authorList>
    </citation>
    <scope>FUNCTION</scope>
    <scope>DISRUPTION PHENOTYPE</scope>
    <scope>BIOTECHNOLOGY</scope>
    <source>
        <strain>KN99</strain>
    </source>
</reference>
<reference evidence="15" key="6">
    <citation type="journal article" date="2017" name="MBio">
        <title>Vaccination with Recombinant Cryptococcus Proteins in Glucan Particles Protects Mice against Cryptococcosis in a Manner Dependent upon Mouse Strain and Cryptococcal Species.</title>
        <authorList>
            <person name="Specht C.A."/>
            <person name="Lee C.K."/>
            <person name="Huang H."/>
            <person name="Hester M.M."/>
            <person name="Liu J."/>
            <person name="Luckie B.A."/>
            <person name="Torres Santana M.A."/>
            <person name="Mirza Z."/>
            <person name="Khoshkenar P."/>
            <person name="Abraham A."/>
            <person name="Shen Z.T."/>
            <person name="Lodge J.K."/>
            <person name="Akalin A."/>
            <person name="Homan J."/>
            <person name="Ostroff G.R."/>
            <person name="Levitz S.M."/>
        </authorList>
    </citation>
    <scope>BIOTECHNOLOGY</scope>
</reference>
<reference evidence="15" key="7">
    <citation type="journal article" date="2018" name="MBio">
        <title>Cryptococcus neoformans Cda1 and Its Chitin Deacetylase Activity Are Required for Fungal Pathogenesis.</title>
        <authorList>
            <person name="Upadhya R."/>
            <person name="Baker L.G."/>
            <person name="Lam W.C."/>
            <person name="Specht C.A."/>
            <person name="Donlin M.J."/>
            <person name="Lodge J.K."/>
        </authorList>
    </citation>
    <scope>FUNCTION</scope>
    <scope>CATALYTIC ACTIVITY</scope>
    <scope>SUBCELLULAR LOCATION</scope>
    <scope>INDUCTION</scope>
    <scope>DISRUPTION PHENOTYPE</scope>
    <scope>MUTAGENESIS OF ASP-166; ASP-167; HIS-216; HIS-220; ARG-254 AND ASP-294</scope>
    <source>
        <strain>KN99</strain>
    </source>
</reference>
<reference evidence="15" key="8">
    <citation type="journal article" date="2019" name="Genetics">
        <title>Roles for Stress Response and Cell Wall Biosynthesis Pathways in Caspofungin Tolerance in Cryptococcus neoformans.</title>
        <authorList>
            <person name="Pianalto K.M."/>
            <person name="Billmyre R.B."/>
            <person name="Telzrow C.L."/>
            <person name="Alspaugh J.A."/>
        </authorList>
    </citation>
    <scope>INDUCTION</scope>
</reference>
<reference evidence="15" key="9">
    <citation type="journal article" date="2020" name="MBio">
        <title>Cryptococcus neoformans Chitin Synthase 3 Plays a Critical Role in Dampening Host Inflammatory Responses.</title>
        <authorList>
            <person name="Hole C.R."/>
            <person name="Lam W.C."/>
            <person name="Upadhya R."/>
            <person name="Lodge J.K."/>
        </authorList>
    </citation>
    <scope>FUNCTION</scope>
    <scope>DISRUPTION PHENOTYPE</scope>
</reference>
<dbReference type="EC" id="3.5.1.41" evidence="16 17"/>
<dbReference type="EMBL" id="CP003826">
    <property type="protein sequence ID" value="AFR96118.1"/>
    <property type="molecule type" value="Genomic_DNA"/>
</dbReference>
<dbReference type="RefSeq" id="XP_012050538.1">
    <property type="nucleotide sequence ID" value="XM_012195148.1"/>
</dbReference>
<dbReference type="SMR" id="J9VPD7"/>
<dbReference type="GlyCosmos" id="J9VPD7">
    <property type="glycosylation" value="5 sites, No reported glycans"/>
</dbReference>
<dbReference type="GeneID" id="23889088"/>
<dbReference type="KEGG" id="cng:CNAG_05799"/>
<dbReference type="VEuPathDB" id="FungiDB:CNAG_05799"/>
<dbReference type="HOGENOM" id="CLU_030200_2_0_1"/>
<dbReference type="OrthoDB" id="7249at5206"/>
<dbReference type="PHI-base" id="PHI:8598"/>
<dbReference type="Proteomes" id="UP000010091">
    <property type="component" value="Chromosome 7"/>
</dbReference>
<dbReference type="GO" id="GO:0005576">
    <property type="term" value="C:extracellular region"/>
    <property type="evidence" value="ECO:0000250"/>
    <property type="project" value="UniProtKB"/>
</dbReference>
<dbReference type="GO" id="GO:0009277">
    <property type="term" value="C:fungal-type cell wall"/>
    <property type="evidence" value="ECO:0000250"/>
    <property type="project" value="UniProtKB"/>
</dbReference>
<dbReference type="GO" id="GO:0005886">
    <property type="term" value="C:plasma membrane"/>
    <property type="evidence" value="ECO:0000250"/>
    <property type="project" value="UniProtKB"/>
</dbReference>
<dbReference type="GO" id="GO:0098552">
    <property type="term" value="C:side of membrane"/>
    <property type="evidence" value="ECO:0007669"/>
    <property type="project" value="UniProtKB-KW"/>
</dbReference>
<dbReference type="GO" id="GO:0008061">
    <property type="term" value="F:chitin binding"/>
    <property type="evidence" value="ECO:0007669"/>
    <property type="project" value="UniProtKB-KW"/>
</dbReference>
<dbReference type="GO" id="GO:0004099">
    <property type="term" value="F:chitin deacetylase activity"/>
    <property type="evidence" value="ECO:0000316"/>
    <property type="project" value="UniProtKB"/>
</dbReference>
<dbReference type="GO" id="GO:0046872">
    <property type="term" value="F:metal ion binding"/>
    <property type="evidence" value="ECO:0007669"/>
    <property type="project" value="UniProtKB-KW"/>
</dbReference>
<dbReference type="GO" id="GO:0071555">
    <property type="term" value="P:cell wall organization"/>
    <property type="evidence" value="ECO:0007669"/>
    <property type="project" value="UniProtKB-KW"/>
</dbReference>
<dbReference type="GO" id="GO:0006032">
    <property type="term" value="P:chitin catabolic process"/>
    <property type="evidence" value="ECO:0000316"/>
    <property type="project" value="UniProtKB"/>
</dbReference>
<dbReference type="GO" id="GO:0009272">
    <property type="term" value="P:fungal-type cell wall biogenesis"/>
    <property type="evidence" value="ECO:0000316"/>
    <property type="project" value="UniProtKB"/>
</dbReference>
<dbReference type="GO" id="GO:0000272">
    <property type="term" value="P:polysaccharide catabolic process"/>
    <property type="evidence" value="ECO:0007669"/>
    <property type="project" value="UniProtKB-KW"/>
</dbReference>
<dbReference type="GO" id="GO:0042783">
    <property type="term" value="P:symbiont-mediated evasion of host immune response"/>
    <property type="evidence" value="ECO:0000315"/>
    <property type="project" value="UniProtKB"/>
</dbReference>
<dbReference type="CDD" id="cd10952">
    <property type="entry name" value="CE4_MrCDA_like"/>
    <property type="match status" value="1"/>
</dbReference>
<dbReference type="FunFam" id="3.20.20.370:FF:000004">
    <property type="entry name" value="Related to Chitin deacetylase"/>
    <property type="match status" value="1"/>
</dbReference>
<dbReference type="Gene3D" id="3.20.20.370">
    <property type="entry name" value="Glycoside hydrolase/deacetylase"/>
    <property type="match status" value="1"/>
</dbReference>
<dbReference type="InterPro" id="IPR011330">
    <property type="entry name" value="Glyco_hydro/deAcase_b/a-brl"/>
</dbReference>
<dbReference type="InterPro" id="IPR002509">
    <property type="entry name" value="NODB_dom"/>
</dbReference>
<dbReference type="InterPro" id="IPR050248">
    <property type="entry name" value="Polysacc_deacetylase_ArnD"/>
</dbReference>
<dbReference type="PANTHER" id="PTHR10587:SF133">
    <property type="entry name" value="CHITIN DEACETYLASE 1-RELATED"/>
    <property type="match status" value="1"/>
</dbReference>
<dbReference type="PANTHER" id="PTHR10587">
    <property type="entry name" value="GLYCOSYL TRANSFERASE-RELATED"/>
    <property type="match status" value="1"/>
</dbReference>
<dbReference type="Pfam" id="PF01522">
    <property type="entry name" value="Polysacc_deac_1"/>
    <property type="match status" value="1"/>
</dbReference>
<dbReference type="SUPFAM" id="SSF88713">
    <property type="entry name" value="Glycoside hydrolase/deacetylase"/>
    <property type="match status" value="1"/>
</dbReference>
<dbReference type="PROSITE" id="PS51677">
    <property type="entry name" value="NODB"/>
    <property type="match status" value="1"/>
</dbReference>
<feature type="signal peptide" evidence="2">
    <location>
        <begin position="1"/>
        <end position="19"/>
    </location>
</feature>
<feature type="chain" id="PRO_5003828006" description="Chitin deacetylase 1" evidence="2">
    <location>
        <begin position="20"/>
        <end position="444"/>
    </location>
</feature>
<feature type="propeptide" id="PRO_0000451809" description="Removed in mature form" evidence="15">
    <location>
        <begin position="445"/>
        <end position="470"/>
    </location>
</feature>
<feature type="domain" description="NodB homology" evidence="4">
    <location>
        <begin position="159"/>
        <end position="358"/>
    </location>
</feature>
<feature type="region of interest" description="Disordered" evidence="5">
    <location>
        <begin position="406"/>
        <end position="447"/>
    </location>
</feature>
<feature type="compositionally biased region" description="Low complexity" evidence="5">
    <location>
        <begin position="408"/>
        <end position="447"/>
    </location>
</feature>
<feature type="active site" description="Proton acceptor" evidence="4">
    <location>
        <position position="166"/>
    </location>
</feature>
<feature type="active site" description="Proton donor" evidence="4">
    <location>
        <position position="331"/>
    </location>
</feature>
<feature type="binding site" evidence="1">
    <location>
        <position position="166"/>
    </location>
    <ligand>
        <name>acetate</name>
        <dbReference type="ChEBI" id="CHEBI:30089"/>
    </ligand>
</feature>
<feature type="binding site" evidence="1">
    <location>
        <position position="167"/>
    </location>
    <ligand>
        <name>Co(2+)</name>
        <dbReference type="ChEBI" id="CHEBI:48828"/>
    </ligand>
</feature>
<feature type="binding site" evidence="1">
    <location>
        <position position="216"/>
    </location>
    <ligand>
        <name>Co(2+)</name>
        <dbReference type="ChEBI" id="CHEBI:48828"/>
    </ligand>
</feature>
<feature type="binding site" evidence="1">
    <location>
        <position position="220"/>
    </location>
    <ligand>
        <name>Co(2+)</name>
        <dbReference type="ChEBI" id="CHEBI:48828"/>
    </ligand>
</feature>
<feature type="binding site" evidence="1">
    <location>
        <position position="257"/>
    </location>
    <ligand>
        <name>acetate</name>
        <dbReference type="ChEBI" id="CHEBI:30089"/>
    </ligand>
</feature>
<feature type="lipid moiety-binding region" description="GPI-anchor amidated serine" evidence="2">
    <location>
        <position position="444"/>
    </location>
</feature>
<feature type="glycosylation site" description="N-linked (GlcNAc...) asparagine" evidence="3">
    <location>
        <position position="101"/>
    </location>
</feature>
<feature type="glycosylation site" description="N-linked (GlcNAc...) asparagine" evidence="3">
    <location>
        <position position="121"/>
    </location>
</feature>
<feature type="glycosylation site" description="N-linked (GlcNAc...) asparagine" evidence="3">
    <location>
        <position position="352"/>
    </location>
</feature>
<feature type="glycosylation site" description="N-linked (GlcNAc...) asparagine" evidence="3">
    <location>
        <position position="378"/>
    </location>
</feature>
<feature type="glycosylation site" description="N-linked (GlcNAc...) asparagine" evidence="3">
    <location>
        <position position="440"/>
    </location>
</feature>
<feature type="disulfide bond" evidence="1">
    <location>
        <begin position="155"/>
        <end position="363"/>
    </location>
</feature>
<feature type="mutagenesis site" description="Abolishes CDA1 activity and results in avirulence in a mouse intranasal infection model, CDA1 localization is unaffected; when associated with A-254 and N-294." evidence="11">
    <original>D</original>
    <variation>N</variation>
    <location>
        <position position="166"/>
    </location>
</feature>
<feature type="mutagenesis site" description="Abolishes CDA1 protein expression; when associated with A-216 and A-220." evidence="11">
    <original>D</original>
    <variation>N</variation>
    <location>
        <position position="167"/>
    </location>
</feature>
<feature type="mutagenesis site" description="Abolishes CDA1 protein expression; when associated with N-167 and A-220." evidence="11">
    <original>H</original>
    <variation>A</variation>
    <location>
        <position position="216"/>
    </location>
</feature>
<feature type="mutagenesis site" description="Abolishes CDA1 protein expression; when associated with N-167 and A-216." evidence="11">
    <original>H</original>
    <variation>A</variation>
    <location>
        <position position="220"/>
    </location>
</feature>
<feature type="mutagenesis site" description="Abolishes CDA1 activity and results in avirulence in a mouse intranasal infection model, CDA1 localization is unaffected; when associated with N-166 and N-294." evidence="11">
    <original>R</original>
    <variation>A</variation>
    <location>
        <position position="254"/>
    </location>
</feature>
<feature type="mutagenesis site" description="Abolishes CDA1 activity and results in avirulence in a mouse intranasal infection model, CDA1 localization is unaffected; when associated with N-166 and A-254." evidence="11">
    <original>D</original>
    <variation>N</variation>
    <location>
        <position position="294"/>
    </location>
</feature>
<keyword id="KW-0119">Carbohydrate metabolism</keyword>
<keyword id="KW-1003">Cell membrane</keyword>
<keyword id="KW-0134">Cell wall</keyword>
<keyword id="KW-0961">Cell wall biogenesis/degradation</keyword>
<keyword id="KW-0146">Chitin degradation</keyword>
<keyword id="KW-0147">Chitin-binding</keyword>
<keyword id="KW-0170">Cobalt</keyword>
<keyword id="KW-1015">Disulfide bond</keyword>
<keyword id="KW-0325">Glycoprotein</keyword>
<keyword id="KW-0336">GPI-anchor</keyword>
<keyword id="KW-0378">Hydrolase</keyword>
<keyword id="KW-0449">Lipoprotein</keyword>
<keyword id="KW-0472">Membrane</keyword>
<keyword id="KW-0479">Metal-binding</keyword>
<keyword id="KW-0624">Polysaccharide degradation</keyword>
<keyword id="KW-0964">Secreted</keyword>
<keyword id="KW-0732">Signal</keyword>
<keyword id="KW-0843">Virulence</keyword>
<proteinExistence type="evidence at protein level"/>
<sequence>MFTFAAFSALLISLAGVVAQTTGTSVDSSILTKTADSTGPSGFSIPALSELTSGAPTDSTVALYSTFAAGATPTVSGAPVLPTSALTIADYPALDVTPPTNSSLVKDWMAKIDLSKVPSYNVTTGDCSTDAAAISDGRCWWTCGGCTRETDIVECPDKNVWGLSYDDGPSPFTPLLIDYLQEKNIKTTFFVVGSRVLSRPEMLQTEYMSGHQISIHTWSHPALTTLTNEEIVAELGWTMKVIKDTLGVTPNTFRPPYGDIDDRVRAIAAQMGLTPVIWTSYTDGSTTVNFDTNDWHISGGTATGASSYETFEKILTEYAPKLDTGFITLEHDIYQQSVDLAVGYILPQVLANGTYQLKSIINCLGKDTSEAYIETSSNQTTTQITAATGSQSTFFQPIVGTATGAEVSAPSEATGSTAAGSAASTTSGSGASASTGAASNTSSSGSGRSATMGGALIALAAVAVGMVYVA</sequence>
<evidence type="ECO:0000250" key="1">
    <source>
        <dbReference type="UniProtKB" id="Q6DWK3"/>
    </source>
</evidence>
<evidence type="ECO:0000255" key="2"/>
<evidence type="ECO:0000255" key="3">
    <source>
        <dbReference type="PROSITE-ProRule" id="PRU00498"/>
    </source>
</evidence>
<evidence type="ECO:0000255" key="4">
    <source>
        <dbReference type="PROSITE-ProRule" id="PRU01014"/>
    </source>
</evidence>
<evidence type="ECO:0000256" key="5">
    <source>
        <dbReference type="SAM" id="MobiDB-lite"/>
    </source>
</evidence>
<evidence type="ECO:0000269" key="6">
    <source>
    </source>
</evidence>
<evidence type="ECO:0000269" key="7">
    <source>
    </source>
</evidence>
<evidence type="ECO:0000269" key="8">
    <source>
    </source>
</evidence>
<evidence type="ECO:0000269" key="9">
    <source>
    </source>
</evidence>
<evidence type="ECO:0000269" key="10">
    <source>
    </source>
</evidence>
<evidence type="ECO:0000269" key="11">
    <source>
    </source>
</evidence>
<evidence type="ECO:0000269" key="12">
    <source>
    </source>
</evidence>
<evidence type="ECO:0000269" key="13">
    <source>
    </source>
</evidence>
<evidence type="ECO:0000303" key="14">
    <source>
    </source>
</evidence>
<evidence type="ECO:0000305" key="15"/>
<evidence type="ECO:0000305" key="16">
    <source>
    </source>
</evidence>
<evidence type="ECO:0000305" key="17">
    <source>
    </source>
</evidence>
<evidence type="ECO:0000312" key="18">
    <source>
        <dbReference type="EMBL" id="AFR96118.1"/>
    </source>
</evidence>
<evidence type="ECO:0000312" key="19">
    <source>
        <dbReference type="Proteomes" id="UP000010091"/>
    </source>
</evidence>